<sequence>MIIVNNTLAFKLKNAPHKPGCYLWKDDAGQVLYVGKAKDIFKRVHHYFNPNRSFKTRALVERIADVEYVILKNENDALNLEAKLIKQYKPRFNLVLKENNGYLYFFITASVKPTLELGRRYEFSKNKYFGPFASSKFRLRDIYDLLLKLFPLRKCAPHERGHPCFYYQLKMCMGQCMGEDTPERYQTTVKGIEQFFNHGPEQVLNHLQQQEIKASEQQNFEAARHFLDLQKAVLELVNMQQTAFIKAKQSHDFIGYVFEKNVLAITVFAYVDNQLIGKNQQVFELPQDDEKEVESALVTFIYHYYSTNKIPKTLTVSLSEENLSLLANSLKINVTQPKNGEQKSILQTVIDNARYALNTKWTGFINNLNRAEVHQQLAQLLQVPSIQSLEIIDISFYDKDHVVGAMLRYENGKRMKALSRRYNINIDHKGDTNYMADVVYRRIISSIQTHKQLPLSDLLIVDGGIAQINTVTKVFASFPNVTQPIIIGLAKNTRHQTDHIVLTDNTTINIDKNTPLFAYLTTIQEEVDSFAKHNAFKRVSRARFQNPLLQIEGVGRKTVQILLDNFQTNAKHWSCFFERIITVYSC</sequence>
<proteinExistence type="inferred from homology"/>
<evidence type="ECO:0000255" key="1">
    <source>
        <dbReference type="HAMAP-Rule" id="MF_00203"/>
    </source>
</evidence>
<comment type="function">
    <text evidence="1">The UvrABC repair system catalyzes the recognition and processing of DNA lesions. UvrC both incises the 5' and 3' sides of the lesion. The N-terminal half is responsible for the 3' incision and the C-terminal half is responsible for the 5' incision.</text>
</comment>
<comment type="subunit">
    <text evidence="1">Interacts with UvrB in an incision complex.</text>
</comment>
<comment type="subcellular location">
    <subcellularLocation>
        <location evidence="1">Cytoplasm</location>
    </subcellularLocation>
</comment>
<comment type="similarity">
    <text evidence="1">Belongs to the UvrC family.</text>
</comment>
<accession>P75350</accession>
<feature type="chain" id="PRO_0000138318" description="UvrABC system protein C">
    <location>
        <begin position="1"/>
        <end position="586"/>
    </location>
</feature>
<feature type="domain" description="GIY-YIG" evidence="1">
    <location>
        <begin position="17"/>
        <end position="94"/>
    </location>
</feature>
<feature type="domain" description="UVR" evidence="1">
    <location>
        <begin position="201"/>
        <end position="236"/>
    </location>
</feature>
<keyword id="KW-0963">Cytoplasm</keyword>
<keyword id="KW-0227">DNA damage</keyword>
<keyword id="KW-0228">DNA excision</keyword>
<keyword id="KW-0234">DNA repair</keyword>
<keyword id="KW-0267">Excision nuclease</keyword>
<keyword id="KW-1185">Reference proteome</keyword>
<keyword id="KW-0742">SOS response</keyword>
<dbReference type="EMBL" id="U00089">
    <property type="protein sequence ID" value="AAB95677.1"/>
    <property type="molecule type" value="Genomic_DNA"/>
</dbReference>
<dbReference type="PIR" id="S73355">
    <property type="entry name" value="S73355"/>
</dbReference>
<dbReference type="RefSeq" id="NP_109813.1">
    <property type="nucleotide sequence ID" value="NC_000912.1"/>
</dbReference>
<dbReference type="SMR" id="P75350"/>
<dbReference type="IntAct" id="P75350">
    <property type="interactions" value="1"/>
</dbReference>
<dbReference type="STRING" id="272634.MPN_125"/>
<dbReference type="EnsemblBacteria" id="AAB95677">
    <property type="protein sequence ID" value="AAB95677"/>
    <property type="gene ID" value="MPN_125"/>
</dbReference>
<dbReference type="KEGG" id="mpn:MPN_125"/>
<dbReference type="PATRIC" id="fig|272634.6.peg.132"/>
<dbReference type="HOGENOM" id="CLU_014841_3_2_14"/>
<dbReference type="OrthoDB" id="9804933at2"/>
<dbReference type="BioCyc" id="MPNE272634:G1GJ3-206-MONOMER"/>
<dbReference type="Proteomes" id="UP000000808">
    <property type="component" value="Chromosome"/>
</dbReference>
<dbReference type="GO" id="GO:0005737">
    <property type="term" value="C:cytoplasm"/>
    <property type="evidence" value="ECO:0007669"/>
    <property type="project" value="UniProtKB-SubCell"/>
</dbReference>
<dbReference type="GO" id="GO:0009380">
    <property type="term" value="C:excinuclease repair complex"/>
    <property type="evidence" value="ECO:0007669"/>
    <property type="project" value="InterPro"/>
</dbReference>
<dbReference type="GO" id="GO:0003677">
    <property type="term" value="F:DNA binding"/>
    <property type="evidence" value="ECO:0007669"/>
    <property type="project" value="UniProtKB-UniRule"/>
</dbReference>
<dbReference type="GO" id="GO:0009381">
    <property type="term" value="F:excinuclease ABC activity"/>
    <property type="evidence" value="ECO:0007669"/>
    <property type="project" value="UniProtKB-UniRule"/>
</dbReference>
<dbReference type="GO" id="GO:0006289">
    <property type="term" value="P:nucleotide-excision repair"/>
    <property type="evidence" value="ECO:0007669"/>
    <property type="project" value="UniProtKB-UniRule"/>
</dbReference>
<dbReference type="GO" id="GO:0009432">
    <property type="term" value="P:SOS response"/>
    <property type="evidence" value="ECO:0007669"/>
    <property type="project" value="UniProtKB-UniRule"/>
</dbReference>
<dbReference type="CDD" id="cd10434">
    <property type="entry name" value="GIY-YIG_UvrC_Cho"/>
    <property type="match status" value="1"/>
</dbReference>
<dbReference type="FunFam" id="3.40.1440.10:FF:000001">
    <property type="entry name" value="UvrABC system protein C"/>
    <property type="match status" value="1"/>
</dbReference>
<dbReference type="Gene3D" id="3.40.1440.10">
    <property type="entry name" value="GIY-YIG endonuclease"/>
    <property type="match status" value="1"/>
</dbReference>
<dbReference type="Gene3D" id="3.30.420.340">
    <property type="entry name" value="UvrC, RNAse H endonuclease domain"/>
    <property type="match status" value="1"/>
</dbReference>
<dbReference type="HAMAP" id="MF_00203">
    <property type="entry name" value="UvrC"/>
    <property type="match status" value="1"/>
</dbReference>
<dbReference type="InterPro" id="IPR000305">
    <property type="entry name" value="GIY-YIG_endonuc"/>
</dbReference>
<dbReference type="InterPro" id="IPR035901">
    <property type="entry name" value="GIY-YIG_endonuc_sf"/>
</dbReference>
<dbReference type="InterPro" id="IPR047296">
    <property type="entry name" value="GIY-YIG_UvrC_Cho"/>
</dbReference>
<dbReference type="InterPro" id="IPR001943">
    <property type="entry name" value="UVR_dom"/>
</dbReference>
<dbReference type="InterPro" id="IPR050066">
    <property type="entry name" value="UvrABC_protein_C"/>
</dbReference>
<dbReference type="InterPro" id="IPR004791">
    <property type="entry name" value="UvrC"/>
</dbReference>
<dbReference type="InterPro" id="IPR001162">
    <property type="entry name" value="UvrC_RNase_H_dom"/>
</dbReference>
<dbReference type="InterPro" id="IPR038476">
    <property type="entry name" value="UvrC_RNase_H_dom_sf"/>
</dbReference>
<dbReference type="NCBIfam" id="TIGR00194">
    <property type="entry name" value="uvrC"/>
    <property type="match status" value="1"/>
</dbReference>
<dbReference type="PANTHER" id="PTHR30562:SF1">
    <property type="entry name" value="UVRABC SYSTEM PROTEIN C"/>
    <property type="match status" value="1"/>
</dbReference>
<dbReference type="PANTHER" id="PTHR30562">
    <property type="entry name" value="UVRC/OXIDOREDUCTASE"/>
    <property type="match status" value="1"/>
</dbReference>
<dbReference type="Pfam" id="PF01541">
    <property type="entry name" value="GIY-YIG"/>
    <property type="match status" value="1"/>
</dbReference>
<dbReference type="Pfam" id="PF22920">
    <property type="entry name" value="UvrC_RNaseH"/>
    <property type="match status" value="1"/>
</dbReference>
<dbReference type="Pfam" id="PF08459">
    <property type="entry name" value="UvrC_RNaseH_dom"/>
    <property type="match status" value="1"/>
</dbReference>
<dbReference type="SMART" id="SM00465">
    <property type="entry name" value="GIYc"/>
    <property type="match status" value="1"/>
</dbReference>
<dbReference type="SUPFAM" id="SSF82771">
    <property type="entry name" value="GIY-YIG endonuclease"/>
    <property type="match status" value="1"/>
</dbReference>
<dbReference type="PROSITE" id="PS50164">
    <property type="entry name" value="GIY_YIG"/>
    <property type="match status" value="1"/>
</dbReference>
<dbReference type="PROSITE" id="PS50151">
    <property type="entry name" value="UVR"/>
    <property type="match status" value="1"/>
</dbReference>
<dbReference type="PROSITE" id="PS50165">
    <property type="entry name" value="UVRC"/>
    <property type="match status" value="1"/>
</dbReference>
<reference key="1">
    <citation type="journal article" date="1996" name="Nucleic Acids Res.">
        <title>Complete sequence analysis of the genome of the bacterium Mycoplasma pneumoniae.</title>
        <authorList>
            <person name="Himmelreich R."/>
            <person name="Hilbert H."/>
            <person name="Plagens H."/>
            <person name="Pirkl E."/>
            <person name="Li B.-C."/>
            <person name="Herrmann R."/>
        </authorList>
    </citation>
    <scope>NUCLEOTIDE SEQUENCE [LARGE SCALE GENOMIC DNA]</scope>
    <source>
        <strain>ATCC 29342 / M129 / Subtype 1</strain>
    </source>
</reference>
<name>UVRC_MYCPN</name>
<gene>
    <name evidence="1" type="primary">uvrC</name>
    <name type="ordered locus">MPN_125</name>
    <name type="ORF">MP029</name>
</gene>
<protein>
    <recommendedName>
        <fullName evidence="1">UvrABC system protein C</fullName>
        <shortName evidence="1">Protein UvrC</shortName>
    </recommendedName>
    <alternativeName>
        <fullName evidence="1">Excinuclease ABC subunit C</fullName>
    </alternativeName>
</protein>
<organism>
    <name type="scientific">Mycoplasma pneumoniae (strain ATCC 29342 / M129 / Subtype 1)</name>
    <name type="common">Mycoplasmoides pneumoniae</name>
    <dbReference type="NCBI Taxonomy" id="272634"/>
    <lineage>
        <taxon>Bacteria</taxon>
        <taxon>Bacillati</taxon>
        <taxon>Mycoplasmatota</taxon>
        <taxon>Mycoplasmoidales</taxon>
        <taxon>Mycoplasmoidaceae</taxon>
        <taxon>Mycoplasmoides</taxon>
    </lineage>
</organism>